<protein>
    <recommendedName>
        <fullName evidence="1">ATP synthase subunit c</fullName>
    </recommendedName>
    <alternativeName>
        <fullName evidence="1">ATP synthase F(0) sector subunit c</fullName>
    </alternativeName>
    <alternativeName>
        <fullName evidence="1">F-type ATPase subunit c</fullName>
        <shortName evidence="1">F-ATPase subunit c</shortName>
    </alternativeName>
    <alternativeName>
        <fullName evidence="1">Lipid-binding protein</fullName>
    </alternativeName>
</protein>
<comment type="function">
    <text evidence="1">F(1)F(0) ATP synthase produces ATP from ADP in the presence of a proton or sodium gradient. F-type ATPases consist of two structural domains, F(1) containing the extramembraneous catalytic core and F(0) containing the membrane proton channel, linked together by a central stalk and a peripheral stalk. During catalysis, ATP synthesis in the catalytic domain of F(1) is coupled via a rotary mechanism of the central stalk subunits to proton translocation.</text>
</comment>
<comment type="function">
    <text evidence="1">Key component of the F(0) channel; it plays a direct role in translocation across the membrane. A homomeric c-ring of between 10-14 subunits forms the central stalk rotor element with the F(1) delta and epsilon subunits.</text>
</comment>
<comment type="subunit">
    <text evidence="1">F-type ATPases have 2 components, F(1) - the catalytic core - and F(0) - the membrane proton channel. F(1) has five subunits: alpha(3), beta(3), gamma(1), delta(1), epsilon(1). F(0) has three main subunits: a(1), b(2) and c(10-14). The alpha and beta chains form an alternating ring which encloses part of the gamma chain. F(1) is attached to F(0) by a central stalk formed by the gamma and epsilon chains, while a peripheral stalk is formed by the delta and b chains.</text>
</comment>
<comment type="subcellular location">
    <subcellularLocation>
        <location evidence="1">Cell inner membrane</location>
        <topology evidence="1">Multi-pass membrane protein</topology>
    </subcellularLocation>
</comment>
<comment type="similarity">
    <text evidence="1">Belongs to the ATPase C chain family.</text>
</comment>
<reference key="1">
    <citation type="journal article" date="2004" name="Proc. Natl. Acad. Sci. U.S.A.">
        <title>Genome sequence of the enterobacterial phytopathogen Erwinia carotovora subsp. atroseptica and characterization of virulence factors.</title>
        <authorList>
            <person name="Bell K.S."/>
            <person name="Sebaihia M."/>
            <person name="Pritchard L."/>
            <person name="Holden M.T.G."/>
            <person name="Hyman L.J."/>
            <person name="Holeva M.C."/>
            <person name="Thomson N.R."/>
            <person name="Bentley S.D."/>
            <person name="Churcher L.J.C."/>
            <person name="Mungall K."/>
            <person name="Atkin R."/>
            <person name="Bason N."/>
            <person name="Brooks K."/>
            <person name="Chillingworth T."/>
            <person name="Clark K."/>
            <person name="Doggett J."/>
            <person name="Fraser A."/>
            <person name="Hance Z."/>
            <person name="Hauser H."/>
            <person name="Jagels K."/>
            <person name="Moule S."/>
            <person name="Norbertczak H."/>
            <person name="Ormond D."/>
            <person name="Price C."/>
            <person name="Quail M.A."/>
            <person name="Sanders M."/>
            <person name="Walker D."/>
            <person name="Whitehead S."/>
            <person name="Salmond G.P.C."/>
            <person name="Birch P.R.J."/>
            <person name="Parkhill J."/>
            <person name="Toth I.K."/>
        </authorList>
    </citation>
    <scope>NUCLEOTIDE SEQUENCE [LARGE SCALE GENOMIC DNA]</scope>
    <source>
        <strain>SCRI 1043 / ATCC BAA-672</strain>
    </source>
</reference>
<feature type="chain" id="PRO_1000184378" description="ATP synthase subunit c">
    <location>
        <begin position="1"/>
        <end position="79"/>
    </location>
</feature>
<feature type="transmembrane region" description="Helical" evidence="1">
    <location>
        <begin position="11"/>
        <end position="31"/>
    </location>
</feature>
<feature type="transmembrane region" description="Helical" evidence="1">
    <location>
        <begin position="53"/>
        <end position="73"/>
    </location>
</feature>
<feature type="site" description="Reversibly protonated during proton transport" evidence="1">
    <location>
        <position position="61"/>
    </location>
</feature>
<gene>
    <name evidence="1" type="primary">atpE</name>
    <name type="ordered locus">ECA4517</name>
</gene>
<keyword id="KW-0066">ATP synthesis</keyword>
<keyword id="KW-0997">Cell inner membrane</keyword>
<keyword id="KW-1003">Cell membrane</keyword>
<keyword id="KW-0138">CF(0)</keyword>
<keyword id="KW-0375">Hydrogen ion transport</keyword>
<keyword id="KW-0406">Ion transport</keyword>
<keyword id="KW-0446">Lipid-binding</keyword>
<keyword id="KW-0472">Membrane</keyword>
<keyword id="KW-1185">Reference proteome</keyword>
<keyword id="KW-0812">Transmembrane</keyword>
<keyword id="KW-1133">Transmembrane helix</keyword>
<keyword id="KW-0813">Transport</keyword>
<proteinExistence type="inferred from homology"/>
<evidence type="ECO:0000255" key="1">
    <source>
        <dbReference type="HAMAP-Rule" id="MF_01396"/>
    </source>
</evidence>
<dbReference type="EMBL" id="BX950851">
    <property type="protein sequence ID" value="CAG77412.1"/>
    <property type="molecule type" value="Genomic_DNA"/>
</dbReference>
<dbReference type="RefSeq" id="WP_005976545.1">
    <property type="nucleotide sequence ID" value="NC_004547.2"/>
</dbReference>
<dbReference type="SMR" id="Q6CYJ0"/>
<dbReference type="STRING" id="218491.ECA4517"/>
<dbReference type="GeneID" id="97764803"/>
<dbReference type="KEGG" id="eca:ECA4517"/>
<dbReference type="eggNOG" id="ENOG5032S3K">
    <property type="taxonomic scope" value="Bacteria"/>
</dbReference>
<dbReference type="HOGENOM" id="CLU_148047_1_0_6"/>
<dbReference type="OrthoDB" id="9811659at2"/>
<dbReference type="Proteomes" id="UP000007966">
    <property type="component" value="Chromosome"/>
</dbReference>
<dbReference type="GO" id="GO:0005886">
    <property type="term" value="C:plasma membrane"/>
    <property type="evidence" value="ECO:0007669"/>
    <property type="project" value="UniProtKB-SubCell"/>
</dbReference>
<dbReference type="GO" id="GO:0045259">
    <property type="term" value="C:proton-transporting ATP synthase complex"/>
    <property type="evidence" value="ECO:0007669"/>
    <property type="project" value="UniProtKB-KW"/>
</dbReference>
<dbReference type="GO" id="GO:0033177">
    <property type="term" value="C:proton-transporting two-sector ATPase complex, proton-transporting domain"/>
    <property type="evidence" value="ECO:0007669"/>
    <property type="project" value="InterPro"/>
</dbReference>
<dbReference type="GO" id="GO:0008289">
    <property type="term" value="F:lipid binding"/>
    <property type="evidence" value="ECO:0007669"/>
    <property type="project" value="UniProtKB-KW"/>
</dbReference>
<dbReference type="GO" id="GO:0046933">
    <property type="term" value="F:proton-transporting ATP synthase activity, rotational mechanism"/>
    <property type="evidence" value="ECO:0007669"/>
    <property type="project" value="UniProtKB-UniRule"/>
</dbReference>
<dbReference type="CDD" id="cd18185">
    <property type="entry name" value="ATP-synt_Fo_c_ATPE"/>
    <property type="match status" value="1"/>
</dbReference>
<dbReference type="FunFam" id="1.20.20.10:FF:000002">
    <property type="entry name" value="ATP synthase subunit c"/>
    <property type="match status" value="1"/>
</dbReference>
<dbReference type="Gene3D" id="1.20.20.10">
    <property type="entry name" value="F1F0 ATP synthase subunit C"/>
    <property type="match status" value="1"/>
</dbReference>
<dbReference type="HAMAP" id="MF_01396">
    <property type="entry name" value="ATP_synth_c_bact"/>
    <property type="match status" value="1"/>
</dbReference>
<dbReference type="InterPro" id="IPR005953">
    <property type="entry name" value="ATP_synth_csu_bac/chlpt"/>
</dbReference>
<dbReference type="InterPro" id="IPR000454">
    <property type="entry name" value="ATP_synth_F0_csu"/>
</dbReference>
<dbReference type="InterPro" id="IPR020537">
    <property type="entry name" value="ATP_synth_F0_csu_DDCD_BS"/>
</dbReference>
<dbReference type="InterPro" id="IPR038662">
    <property type="entry name" value="ATP_synth_F0_csu_sf"/>
</dbReference>
<dbReference type="InterPro" id="IPR002379">
    <property type="entry name" value="ATPase_proteolipid_c-like_dom"/>
</dbReference>
<dbReference type="InterPro" id="IPR035921">
    <property type="entry name" value="F/V-ATP_Csub_sf"/>
</dbReference>
<dbReference type="NCBIfam" id="TIGR01260">
    <property type="entry name" value="ATP_synt_c"/>
    <property type="match status" value="1"/>
</dbReference>
<dbReference type="NCBIfam" id="NF005363">
    <property type="entry name" value="PRK06876.1"/>
    <property type="match status" value="1"/>
</dbReference>
<dbReference type="Pfam" id="PF00137">
    <property type="entry name" value="ATP-synt_C"/>
    <property type="match status" value="1"/>
</dbReference>
<dbReference type="PRINTS" id="PR00124">
    <property type="entry name" value="ATPASEC"/>
</dbReference>
<dbReference type="SUPFAM" id="SSF81333">
    <property type="entry name" value="F1F0 ATP synthase subunit C"/>
    <property type="match status" value="1"/>
</dbReference>
<dbReference type="PROSITE" id="PS00605">
    <property type="entry name" value="ATPASE_C"/>
    <property type="match status" value="1"/>
</dbReference>
<sequence>MENLSVDLLYMAAALMMGLAAIGAAIGIGILGGKFLEGAARQPDLIPLLRTQFFIVMGLVDAIPMIAVGLGLYVMFAVA</sequence>
<accession>Q6CYJ0</accession>
<name>ATPL_PECAS</name>
<organism>
    <name type="scientific">Pectobacterium atrosepticum (strain SCRI 1043 / ATCC BAA-672)</name>
    <name type="common">Erwinia carotovora subsp. atroseptica</name>
    <dbReference type="NCBI Taxonomy" id="218491"/>
    <lineage>
        <taxon>Bacteria</taxon>
        <taxon>Pseudomonadati</taxon>
        <taxon>Pseudomonadota</taxon>
        <taxon>Gammaproteobacteria</taxon>
        <taxon>Enterobacterales</taxon>
        <taxon>Pectobacteriaceae</taxon>
        <taxon>Pectobacterium</taxon>
    </lineage>
</organism>